<dbReference type="EMBL" id="AL353912">
    <property type="protein sequence ID" value="CAB89224.1"/>
    <property type="molecule type" value="Genomic_DNA"/>
</dbReference>
<dbReference type="EMBL" id="CP002686">
    <property type="protein sequence ID" value="AEE78971.1"/>
    <property type="molecule type" value="Genomic_DNA"/>
</dbReference>
<dbReference type="EMBL" id="CP002686">
    <property type="protein sequence ID" value="AEE78972.1"/>
    <property type="molecule type" value="Genomic_DNA"/>
</dbReference>
<dbReference type="PIR" id="T49016">
    <property type="entry name" value="T49016"/>
</dbReference>
<dbReference type="RefSeq" id="NP_001078273.1">
    <property type="nucleotide sequence ID" value="NM_001084804.2"/>
</dbReference>
<dbReference type="RefSeq" id="NP_190831.1">
    <property type="nucleotide sequence ID" value="NM_115123.2"/>
</dbReference>
<dbReference type="SMR" id="Q9LXK1"/>
<dbReference type="BioGRID" id="9747">
    <property type="interactions" value="1"/>
</dbReference>
<dbReference type="FunCoup" id="Q9LXK1">
    <property type="interactions" value="29"/>
</dbReference>
<dbReference type="IntAct" id="Q9LXK1">
    <property type="interactions" value="1"/>
</dbReference>
<dbReference type="STRING" id="3702.Q9LXK1"/>
<dbReference type="PaxDb" id="3702-AT3G52630.2"/>
<dbReference type="ProteomicsDB" id="236995"/>
<dbReference type="EnsemblPlants" id="AT3G52630.1">
    <property type="protein sequence ID" value="AT3G52630.1"/>
    <property type="gene ID" value="AT3G52630"/>
</dbReference>
<dbReference type="EnsemblPlants" id="AT3G52630.2">
    <property type="protein sequence ID" value="AT3G52630.2"/>
    <property type="gene ID" value="AT3G52630"/>
</dbReference>
<dbReference type="GeneID" id="824429"/>
<dbReference type="Gramene" id="AT3G52630.1">
    <property type="protein sequence ID" value="AT3G52630.1"/>
    <property type="gene ID" value="AT3G52630"/>
</dbReference>
<dbReference type="Gramene" id="AT3G52630.2">
    <property type="protein sequence ID" value="AT3G52630.2"/>
    <property type="gene ID" value="AT3G52630"/>
</dbReference>
<dbReference type="KEGG" id="ath:AT3G52630"/>
<dbReference type="Araport" id="AT3G52630"/>
<dbReference type="TAIR" id="AT3G52630">
    <property type="gene designation" value="RPA3A"/>
</dbReference>
<dbReference type="eggNOG" id="ENOG502S57Y">
    <property type="taxonomic scope" value="Eukaryota"/>
</dbReference>
<dbReference type="HOGENOM" id="CLU_141922_3_0_1"/>
<dbReference type="InParanoid" id="Q9LXK1"/>
<dbReference type="OMA" id="SIEAEIW"/>
<dbReference type="OrthoDB" id="188186at2759"/>
<dbReference type="PhylomeDB" id="Q9LXK1"/>
<dbReference type="PRO" id="PR:Q9LXK1"/>
<dbReference type="Proteomes" id="UP000006548">
    <property type="component" value="Chromosome 3"/>
</dbReference>
<dbReference type="ExpressionAtlas" id="Q9LXK1">
    <property type="expression patterns" value="baseline and differential"/>
</dbReference>
<dbReference type="GO" id="GO:0031981">
    <property type="term" value="C:nuclear lumen"/>
    <property type="evidence" value="ECO:0007669"/>
    <property type="project" value="UniProtKB-ARBA"/>
</dbReference>
<dbReference type="GO" id="GO:0003677">
    <property type="term" value="F:DNA binding"/>
    <property type="evidence" value="ECO:0007669"/>
    <property type="project" value="UniProtKB-KW"/>
</dbReference>
<dbReference type="GO" id="GO:0006310">
    <property type="term" value="P:DNA recombination"/>
    <property type="evidence" value="ECO:0007669"/>
    <property type="project" value="UniProtKB-KW"/>
</dbReference>
<dbReference type="GO" id="GO:0006281">
    <property type="term" value="P:DNA repair"/>
    <property type="evidence" value="ECO:0007669"/>
    <property type="project" value="UniProtKB-KW"/>
</dbReference>
<dbReference type="GO" id="GO:0006260">
    <property type="term" value="P:DNA replication"/>
    <property type="evidence" value="ECO:0007669"/>
    <property type="project" value="UniProtKB-KW"/>
</dbReference>
<dbReference type="CDD" id="cd04479">
    <property type="entry name" value="RPA3"/>
    <property type="match status" value="1"/>
</dbReference>
<dbReference type="Gene3D" id="2.40.50.140">
    <property type="entry name" value="Nucleic acid-binding proteins"/>
    <property type="match status" value="1"/>
</dbReference>
<dbReference type="InterPro" id="IPR012340">
    <property type="entry name" value="NA-bd_OB-fold"/>
</dbReference>
<dbReference type="InterPro" id="IPR013970">
    <property type="entry name" value="Rfa2"/>
</dbReference>
<dbReference type="PANTHER" id="PTHR47058">
    <property type="entry name" value="REPLICATION PROTEIN A 14 KDA SUBUNIT A-RELATED"/>
    <property type="match status" value="1"/>
</dbReference>
<dbReference type="PANTHER" id="PTHR47058:SF3">
    <property type="entry name" value="REPLICATION PROTEIN A 14 KDA SUBUNIT A-RELATED"/>
    <property type="match status" value="1"/>
</dbReference>
<dbReference type="Pfam" id="PF08661">
    <property type="entry name" value="Rep_fac-A_3"/>
    <property type="match status" value="1"/>
</dbReference>
<dbReference type="SUPFAM" id="SSF50249">
    <property type="entry name" value="Nucleic acid-binding proteins"/>
    <property type="match status" value="1"/>
</dbReference>
<sequence length="107" mass="11653">MDTSSPSAFVNGALLRRFIGQKVRTVIQVTGSEIGSVVGKSTDDLQIVVRGSSPPSPLTTYLEVIGIAESDNAIRAETWTNFGNTFDTQNYNELCKLANGEFKHLFI</sequence>
<protein>
    <recommendedName>
        <fullName>Replication protein A 14 kDa subunit A</fullName>
        <shortName>AtRPA14A</shortName>
    </recommendedName>
    <alternativeName>
        <fullName>Replication factor A protein 3A</fullName>
    </alternativeName>
    <alternativeName>
        <fullName>Replication protein A 3A</fullName>
    </alternativeName>
</protein>
<organism>
    <name type="scientific">Arabidopsis thaliana</name>
    <name type="common">Mouse-ear cress</name>
    <dbReference type="NCBI Taxonomy" id="3702"/>
    <lineage>
        <taxon>Eukaryota</taxon>
        <taxon>Viridiplantae</taxon>
        <taxon>Streptophyta</taxon>
        <taxon>Embryophyta</taxon>
        <taxon>Tracheophyta</taxon>
        <taxon>Spermatophyta</taxon>
        <taxon>Magnoliopsida</taxon>
        <taxon>eudicotyledons</taxon>
        <taxon>Gunneridae</taxon>
        <taxon>Pentapetalae</taxon>
        <taxon>rosids</taxon>
        <taxon>malvids</taxon>
        <taxon>Brassicales</taxon>
        <taxon>Brassicaceae</taxon>
        <taxon>Camelineae</taxon>
        <taxon>Arabidopsis</taxon>
    </lineage>
</organism>
<reference key="1">
    <citation type="journal article" date="2000" name="Nature">
        <title>Sequence and analysis of chromosome 3 of the plant Arabidopsis thaliana.</title>
        <authorList>
            <person name="Salanoubat M."/>
            <person name="Lemcke K."/>
            <person name="Rieger M."/>
            <person name="Ansorge W."/>
            <person name="Unseld M."/>
            <person name="Fartmann B."/>
            <person name="Valle G."/>
            <person name="Bloecker H."/>
            <person name="Perez-Alonso M."/>
            <person name="Obermaier B."/>
            <person name="Delseny M."/>
            <person name="Boutry M."/>
            <person name="Grivell L.A."/>
            <person name="Mache R."/>
            <person name="Puigdomenech P."/>
            <person name="De Simone V."/>
            <person name="Choisne N."/>
            <person name="Artiguenave F."/>
            <person name="Robert C."/>
            <person name="Brottier P."/>
            <person name="Wincker P."/>
            <person name="Cattolico L."/>
            <person name="Weissenbach J."/>
            <person name="Saurin W."/>
            <person name="Quetier F."/>
            <person name="Schaefer M."/>
            <person name="Mueller-Auer S."/>
            <person name="Gabel C."/>
            <person name="Fuchs M."/>
            <person name="Benes V."/>
            <person name="Wurmbach E."/>
            <person name="Drzonek H."/>
            <person name="Erfle H."/>
            <person name="Jordan N."/>
            <person name="Bangert S."/>
            <person name="Wiedelmann R."/>
            <person name="Kranz H."/>
            <person name="Voss H."/>
            <person name="Holland R."/>
            <person name="Brandt P."/>
            <person name="Nyakatura G."/>
            <person name="Vezzi A."/>
            <person name="D'Angelo M."/>
            <person name="Pallavicini A."/>
            <person name="Toppo S."/>
            <person name="Simionati B."/>
            <person name="Conrad A."/>
            <person name="Hornischer K."/>
            <person name="Kauer G."/>
            <person name="Loehnert T.-H."/>
            <person name="Nordsiek G."/>
            <person name="Reichelt J."/>
            <person name="Scharfe M."/>
            <person name="Schoen O."/>
            <person name="Bargues M."/>
            <person name="Terol J."/>
            <person name="Climent J."/>
            <person name="Navarro P."/>
            <person name="Collado C."/>
            <person name="Perez-Perez A."/>
            <person name="Ottenwaelder B."/>
            <person name="Duchemin D."/>
            <person name="Cooke R."/>
            <person name="Laudie M."/>
            <person name="Berger-Llauro C."/>
            <person name="Purnelle B."/>
            <person name="Masuy D."/>
            <person name="de Haan M."/>
            <person name="Maarse A.C."/>
            <person name="Alcaraz J.-P."/>
            <person name="Cottet A."/>
            <person name="Casacuberta E."/>
            <person name="Monfort A."/>
            <person name="Argiriou A."/>
            <person name="Flores M."/>
            <person name="Liguori R."/>
            <person name="Vitale D."/>
            <person name="Mannhaupt G."/>
            <person name="Haase D."/>
            <person name="Schoof H."/>
            <person name="Rudd S."/>
            <person name="Zaccaria P."/>
            <person name="Mewes H.-W."/>
            <person name="Mayer K.F.X."/>
            <person name="Kaul S."/>
            <person name="Town C.D."/>
            <person name="Koo H.L."/>
            <person name="Tallon L.J."/>
            <person name="Jenkins J."/>
            <person name="Rooney T."/>
            <person name="Rizzo M."/>
            <person name="Walts A."/>
            <person name="Utterback T."/>
            <person name="Fujii C.Y."/>
            <person name="Shea T.P."/>
            <person name="Creasy T.H."/>
            <person name="Haas B."/>
            <person name="Maiti R."/>
            <person name="Wu D."/>
            <person name="Peterson J."/>
            <person name="Van Aken S."/>
            <person name="Pai G."/>
            <person name="Militscher J."/>
            <person name="Sellers P."/>
            <person name="Gill J.E."/>
            <person name="Feldblyum T.V."/>
            <person name="Preuss D."/>
            <person name="Lin X."/>
            <person name="Nierman W.C."/>
            <person name="Salzberg S.L."/>
            <person name="White O."/>
            <person name="Venter J.C."/>
            <person name="Fraser C.M."/>
            <person name="Kaneko T."/>
            <person name="Nakamura Y."/>
            <person name="Sato S."/>
            <person name="Kato T."/>
            <person name="Asamizu E."/>
            <person name="Sasamoto S."/>
            <person name="Kimura T."/>
            <person name="Idesawa K."/>
            <person name="Kawashima K."/>
            <person name="Kishida Y."/>
            <person name="Kiyokawa C."/>
            <person name="Kohara M."/>
            <person name="Matsumoto M."/>
            <person name="Matsuno A."/>
            <person name="Muraki A."/>
            <person name="Nakayama S."/>
            <person name="Nakazaki N."/>
            <person name="Shinpo S."/>
            <person name="Takeuchi C."/>
            <person name="Wada T."/>
            <person name="Watanabe A."/>
            <person name="Yamada M."/>
            <person name="Yasuda M."/>
            <person name="Tabata S."/>
        </authorList>
    </citation>
    <scope>NUCLEOTIDE SEQUENCE [LARGE SCALE GENOMIC DNA]</scope>
    <source>
        <strain>cv. Columbia</strain>
    </source>
</reference>
<reference key="2">
    <citation type="journal article" date="2017" name="Plant J.">
        <title>Araport11: a complete reannotation of the Arabidopsis thaliana reference genome.</title>
        <authorList>
            <person name="Cheng C.Y."/>
            <person name="Krishnakumar V."/>
            <person name="Chan A.P."/>
            <person name="Thibaud-Nissen F."/>
            <person name="Schobel S."/>
            <person name="Town C.D."/>
        </authorList>
    </citation>
    <scope>GENOME REANNOTATION</scope>
    <source>
        <strain>cv. Columbia</strain>
    </source>
</reference>
<feature type="chain" id="PRO_0000422626" description="Replication protein A 14 kDa subunit A">
    <location>
        <begin position="1"/>
        <end position="107"/>
    </location>
</feature>
<feature type="modified residue" description="N-acetylmethionine" evidence="2">
    <location>
        <position position="1"/>
    </location>
</feature>
<keyword id="KW-0007">Acetylation</keyword>
<keyword id="KW-0227">DNA damage</keyword>
<keyword id="KW-0233">DNA recombination</keyword>
<keyword id="KW-0234">DNA repair</keyword>
<keyword id="KW-0235">DNA replication</keyword>
<keyword id="KW-0238">DNA-binding</keyword>
<keyword id="KW-0539">Nucleus</keyword>
<keyword id="KW-1185">Reference proteome</keyword>
<gene>
    <name type="primary">RPA3A</name>
    <name type="synonym">RAFA3A</name>
    <name type="synonym">RPA14A</name>
    <name type="ordered locus">At3g52630</name>
    <name type="ORF">F3C22.30</name>
</gene>
<proteinExistence type="inferred from homology"/>
<name>RFA3A_ARATH</name>
<comment type="function">
    <text evidence="1">As part of the replication protein A (RPA/RP-A), a single-stranded DNA-binding heterotrimeric complex, may play an essential role in DNA replication, recombination and repair. Binds and stabilizes single-stranded DNA intermediates, preventing complementary DNA reannealing and recruiting different proteins involved in DNA metabolism (By similarity).</text>
</comment>
<comment type="subunit">
    <text evidence="1">Component of the heterotrimeric canonical replication protein A complex (RPA).</text>
</comment>
<comment type="subcellular location">
    <subcellularLocation>
        <location evidence="1">Nucleus</location>
    </subcellularLocation>
</comment>
<comment type="similarity">
    <text evidence="3">Belongs to the replication factor A protein 3 family.</text>
</comment>
<evidence type="ECO:0000250" key="1"/>
<evidence type="ECO:0000250" key="2">
    <source>
        <dbReference type="UniProtKB" id="Q6NLG7"/>
    </source>
</evidence>
<evidence type="ECO:0000305" key="3"/>
<accession>Q9LXK1</accession>